<reference key="1">
    <citation type="journal article" date="2006" name="BMC Genomics">
        <title>Complete genome sequence of Shigella flexneri 5b and comparison with Shigella flexneri 2a.</title>
        <authorList>
            <person name="Nie H."/>
            <person name="Yang F."/>
            <person name="Zhang X."/>
            <person name="Yang J."/>
            <person name="Chen L."/>
            <person name="Wang J."/>
            <person name="Xiong Z."/>
            <person name="Peng J."/>
            <person name="Sun L."/>
            <person name="Dong J."/>
            <person name="Xue Y."/>
            <person name="Xu X."/>
            <person name="Chen S."/>
            <person name="Yao Z."/>
            <person name="Shen Y."/>
            <person name="Jin Q."/>
        </authorList>
    </citation>
    <scope>NUCLEOTIDE SEQUENCE [LARGE SCALE GENOMIC DNA]</scope>
    <source>
        <strain>8401</strain>
    </source>
</reference>
<gene>
    <name evidence="1" type="primary">cysC</name>
    <name type="ordered locus">SFV_2748</name>
</gene>
<sequence length="201" mass="22321">MALHDENVVWHSHPVTVQQRELHHGHRGVVLWFTGLSGSGKSTVAGALEEALHKLGVSTYLLDGDNVRHGLCSDLGFSDADRKENIRRVGEVANLMVEAGLVVLTAFISPHRAERQMVRERVGEGRFIEVFVDTPLAICEARDPKGLYKKARAGELRNFTGIDSVYEAPESAEIHLNGEQLVTNLVQQLLDLLRQNDIIRS</sequence>
<proteinExistence type="inferred from homology"/>
<comment type="function">
    <text evidence="1">Catalyzes the synthesis of activated sulfate.</text>
</comment>
<comment type="catalytic activity">
    <reaction evidence="1">
        <text>adenosine 5'-phosphosulfate + ATP = 3'-phosphoadenylyl sulfate + ADP + H(+)</text>
        <dbReference type="Rhea" id="RHEA:24152"/>
        <dbReference type="ChEBI" id="CHEBI:15378"/>
        <dbReference type="ChEBI" id="CHEBI:30616"/>
        <dbReference type="ChEBI" id="CHEBI:58243"/>
        <dbReference type="ChEBI" id="CHEBI:58339"/>
        <dbReference type="ChEBI" id="CHEBI:456216"/>
        <dbReference type="EC" id="2.7.1.25"/>
    </reaction>
</comment>
<comment type="pathway">
    <text evidence="1">Sulfur metabolism; hydrogen sulfide biosynthesis; sulfite from sulfate: step 2/3.</text>
</comment>
<comment type="similarity">
    <text evidence="1">Belongs to the APS kinase family.</text>
</comment>
<keyword id="KW-0067">ATP-binding</keyword>
<keyword id="KW-0418">Kinase</keyword>
<keyword id="KW-0547">Nucleotide-binding</keyword>
<keyword id="KW-0597">Phosphoprotein</keyword>
<keyword id="KW-0808">Transferase</keyword>
<feature type="chain" id="PRO_1000009033" description="Adenylyl-sulfate kinase">
    <location>
        <begin position="1"/>
        <end position="201"/>
    </location>
</feature>
<feature type="active site" description="Phosphoserine intermediate" evidence="1">
    <location>
        <position position="109"/>
    </location>
</feature>
<feature type="binding site" evidence="1">
    <location>
        <begin position="35"/>
        <end position="42"/>
    </location>
    <ligand>
        <name>ATP</name>
        <dbReference type="ChEBI" id="CHEBI:30616"/>
    </ligand>
</feature>
<protein>
    <recommendedName>
        <fullName evidence="1">Adenylyl-sulfate kinase</fullName>
        <ecNumber evidence="1">2.7.1.25</ecNumber>
    </recommendedName>
    <alternativeName>
        <fullName evidence="1">APS kinase</fullName>
    </alternativeName>
    <alternativeName>
        <fullName evidence="1">ATP adenosine-5'-phosphosulfate 3'-phosphotransferase</fullName>
    </alternativeName>
    <alternativeName>
        <fullName evidence="1">Adenosine-5'-phosphosulfate kinase</fullName>
    </alternativeName>
</protein>
<organism>
    <name type="scientific">Shigella flexneri serotype 5b (strain 8401)</name>
    <dbReference type="NCBI Taxonomy" id="373384"/>
    <lineage>
        <taxon>Bacteria</taxon>
        <taxon>Pseudomonadati</taxon>
        <taxon>Pseudomonadota</taxon>
        <taxon>Gammaproteobacteria</taxon>
        <taxon>Enterobacterales</taxon>
        <taxon>Enterobacteriaceae</taxon>
        <taxon>Shigella</taxon>
    </lineage>
</organism>
<dbReference type="EC" id="2.7.1.25" evidence="1"/>
<dbReference type="EMBL" id="CP000266">
    <property type="protein sequence ID" value="ABF04834.1"/>
    <property type="molecule type" value="Genomic_DNA"/>
</dbReference>
<dbReference type="RefSeq" id="WP_001173673.1">
    <property type="nucleotide sequence ID" value="NC_008258.1"/>
</dbReference>
<dbReference type="SMR" id="Q0T1I1"/>
<dbReference type="GeneID" id="93779256"/>
<dbReference type="KEGG" id="sfv:SFV_2748"/>
<dbReference type="HOGENOM" id="CLU_046932_1_0_6"/>
<dbReference type="UniPathway" id="UPA00140">
    <property type="reaction ID" value="UER00205"/>
</dbReference>
<dbReference type="Proteomes" id="UP000000659">
    <property type="component" value="Chromosome"/>
</dbReference>
<dbReference type="GO" id="GO:0004020">
    <property type="term" value="F:adenylylsulfate kinase activity"/>
    <property type="evidence" value="ECO:0007669"/>
    <property type="project" value="UniProtKB-UniRule"/>
</dbReference>
<dbReference type="GO" id="GO:0005524">
    <property type="term" value="F:ATP binding"/>
    <property type="evidence" value="ECO:0007669"/>
    <property type="project" value="UniProtKB-UniRule"/>
</dbReference>
<dbReference type="GO" id="GO:0070814">
    <property type="term" value="P:hydrogen sulfide biosynthetic process"/>
    <property type="evidence" value="ECO:0007669"/>
    <property type="project" value="UniProtKB-UniRule"/>
</dbReference>
<dbReference type="GO" id="GO:0000103">
    <property type="term" value="P:sulfate assimilation"/>
    <property type="evidence" value="ECO:0007669"/>
    <property type="project" value="UniProtKB-UniRule"/>
</dbReference>
<dbReference type="CDD" id="cd02027">
    <property type="entry name" value="APSK"/>
    <property type="match status" value="1"/>
</dbReference>
<dbReference type="FunFam" id="3.40.50.300:FF:000212">
    <property type="entry name" value="Adenylyl-sulfate kinase"/>
    <property type="match status" value="1"/>
</dbReference>
<dbReference type="Gene3D" id="3.40.50.300">
    <property type="entry name" value="P-loop containing nucleotide triphosphate hydrolases"/>
    <property type="match status" value="1"/>
</dbReference>
<dbReference type="HAMAP" id="MF_00065">
    <property type="entry name" value="Adenylyl_sulf_kinase"/>
    <property type="match status" value="1"/>
</dbReference>
<dbReference type="InterPro" id="IPR002891">
    <property type="entry name" value="APS_kinase"/>
</dbReference>
<dbReference type="InterPro" id="IPR027417">
    <property type="entry name" value="P-loop_NTPase"/>
</dbReference>
<dbReference type="NCBIfam" id="TIGR00455">
    <property type="entry name" value="apsK"/>
    <property type="match status" value="1"/>
</dbReference>
<dbReference type="NCBIfam" id="NF003013">
    <property type="entry name" value="PRK03846.1"/>
    <property type="match status" value="1"/>
</dbReference>
<dbReference type="PANTHER" id="PTHR11055:SF63">
    <property type="entry name" value="ADENYLYL-SULFATE KINASE 1, CHLOROPLASTIC"/>
    <property type="match status" value="1"/>
</dbReference>
<dbReference type="PANTHER" id="PTHR11055">
    <property type="entry name" value="BIFUNCTIONAL 3'-PHOSPHOADENOSINE 5'-PHOSPHOSULFATE SYNTHASE"/>
    <property type="match status" value="1"/>
</dbReference>
<dbReference type="Pfam" id="PF01583">
    <property type="entry name" value="APS_kinase"/>
    <property type="match status" value="1"/>
</dbReference>
<dbReference type="SUPFAM" id="SSF52540">
    <property type="entry name" value="P-loop containing nucleoside triphosphate hydrolases"/>
    <property type="match status" value="1"/>
</dbReference>
<accession>Q0T1I1</accession>
<name>CYSC_SHIF8</name>
<evidence type="ECO:0000255" key="1">
    <source>
        <dbReference type="HAMAP-Rule" id="MF_00065"/>
    </source>
</evidence>